<keyword id="KW-0997">Cell inner membrane</keyword>
<keyword id="KW-1003">Cell membrane</keyword>
<keyword id="KW-0444">Lipid biosynthesis</keyword>
<keyword id="KW-0443">Lipid metabolism</keyword>
<keyword id="KW-0472">Membrane</keyword>
<keyword id="KW-0594">Phospholipid biosynthesis</keyword>
<keyword id="KW-1208">Phospholipid metabolism</keyword>
<keyword id="KW-0808">Transferase</keyword>
<keyword id="KW-0812">Transmembrane</keyword>
<keyword id="KW-1133">Transmembrane helix</keyword>
<accession>Q5HWB0</accession>
<organism>
    <name type="scientific">Campylobacter jejuni (strain RM1221)</name>
    <dbReference type="NCBI Taxonomy" id="195099"/>
    <lineage>
        <taxon>Bacteria</taxon>
        <taxon>Pseudomonadati</taxon>
        <taxon>Campylobacterota</taxon>
        <taxon>Epsilonproteobacteria</taxon>
        <taxon>Campylobacterales</taxon>
        <taxon>Campylobacteraceae</taxon>
        <taxon>Campylobacter</taxon>
    </lineage>
</organism>
<protein>
    <recommendedName>
        <fullName evidence="1">Glycerol-3-phosphate acyltransferase</fullName>
    </recommendedName>
    <alternativeName>
        <fullName evidence="1">Acyl-PO4 G3P acyltransferase</fullName>
    </alternativeName>
    <alternativeName>
        <fullName evidence="1">Acyl-phosphate--glycerol-3-phosphate acyltransferase</fullName>
    </alternativeName>
    <alternativeName>
        <fullName evidence="1">G3P acyltransferase</fullName>
        <shortName evidence="1">GPAT</shortName>
        <ecNumber evidence="1">2.3.1.275</ecNumber>
    </alternativeName>
    <alternativeName>
        <fullName evidence="1">Lysophosphatidic acid synthase</fullName>
        <shortName evidence="1">LPA synthase</shortName>
    </alternativeName>
</protein>
<dbReference type="EC" id="2.3.1.275" evidence="1"/>
<dbReference type="EMBL" id="CP000025">
    <property type="protein sequence ID" value="AAW34995.1"/>
    <property type="molecule type" value="Genomic_DNA"/>
</dbReference>
<dbReference type="RefSeq" id="WP_002867769.1">
    <property type="nucleotide sequence ID" value="NC_003912.7"/>
</dbReference>
<dbReference type="SMR" id="Q5HWB0"/>
<dbReference type="KEGG" id="cjr:CJE0406"/>
<dbReference type="HOGENOM" id="CLU_081254_2_0_7"/>
<dbReference type="UniPathway" id="UPA00085"/>
<dbReference type="GO" id="GO:0005886">
    <property type="term" value="C:plasma membrane"/>
    <property type="evidence" value="ECO:0007669"/>
    <property type="project" value="UniProtKB-SubCell"/>
</dbReference>
<dbReference type="GO" id="GO:0043772">
    <property type="term" value="F:acyl-phosphate glycerol-3-phosphate acyltransferase activity"/>
    <property type="evidence" value="ECO:0007669"/>
    <property type="project" value="UniProtKB-UniRule"/>
</dbReference>
<dbReference type="GO" id="GO:0008654">
    <property type="term" value="P:phospholipid biosynthetic process"/>
    <property type="evidence" value="ECO:0007669"/>
    <property type="project" value="UniProtKB-UniRule"/>
</dbReference>
<dbReference type="HAMAP" id="MF_01043">
    <property type="entry name" value="PlsY"/>
    <property type="match status" value="1"/>
</dbReference>
<dbReference type="InterPro" id="IPR003811">
    <property type="entry name" value="G3P_acylTferase_PlsY"/>
</dbReference>
<dbReference type="NCBIfam" id="TIGR00023">
    <property type="entry name" value="glycerol-3-phosphate 1-O-acyltransferase PlsY"/>
    <property type="match status" value="1"/>
</dbReference>
<dbReference type="PANTHER" id="PTHR30309:SF0">
    <property type="entry name" value="GLYCEROL-3-PHOSPHATE ACYLTRANSFERASE-RELATED"/>
    <property type="match status" value="1"/>
</dbReference>
<dbReference type="PANTHER" id="PTHR30309">
    <property type="entry name" value="INNER MEMBRANE PROTEIN YGIH"/>
    <property type="match status" value="1"/>
</dbReference>
<dbReference type="Pfam" id="PF02660">
    <property type="entry name" value="G3P_acyltransf"/>
    <property type="match status" value="1"/>
</dbReference>
<dbReference type="SMART" id="SM01207">
    <property type="entry name" value="G3P_acyltransf"/>
    <property type="match status" value="1"/>
</dbReference>
<reference key="1">
    <citation type="journal article" date="2005" name="PLoS Biol.">
        <title>Major structural differences and novel potential virulence mechanisms from the genomes of multiple Campylobacter species.</title>
        <authorList>
            <person name="Fouts D.E."/>
            <person name="Mongodin E.F."/>
            <person name="Mandrell R.E."/>
            <person name="Miller W.G."/>
            <person name="Rasko D.A."/>
            <person name="Ravel J."/>
            <person name="Brinkac L.M."/>
            <person name="DeBoy R.T."/>
            <person name="Parker C.T."/>
            <person name="Daugherty S.C."/>
            <person name="Dodson R.J."/>
            <person name="Durkin A.S."/>
            <person name="Madupu R."/>
            <person name="Sullivan S.A."/>
            <person name="Shetty J.U."/>
            <person name="Ayodeji M.A."/>
            <person name="Shvartsbeyn A."/>
            <person name="Schatz M.C."/>
            <person name="Badger J.H."/>
            <person name="Fraser C.M."/>
            <person name="Nelson K.E."/>
        </authorList>
    </citation>
    <scope>NUCLEOTIDE SEQUENCE [LARGE SCALE GENOMIC DNA]</scope>
    <source>
        <strain>RM1221</strain>
    </source>
</reference>
<sequence>MENLIIYAFIYLLSSIPFGLILAKFFAKTDIKKEGSKSIGATNVLRVVKEKNPKLAKKLAIATIILDFAKAAIPLLTLKFLHYDQALLWSVAVLAILGHCFSIYLLFEGGKGIATGAGAMIVLLPLEVLTAFIVWVVIGKIFKISSLASLAALLAFVVSSFIFNYDLEIHTHAPVFIIAFIIVYKHLPNIKRLIFKEECKVI</sequence>
<feature type="chain" id="PRO_0000188342" description="Glycerol-3-phosphate acyltransferase">
    <location>
        <begin position="1"/>
        <end position="202"/>
    </location>
</feature>
<feature type="transmembrane region" description="Helical" evidence="1">
    <location>
        <begin position="3"/>
        <end position="23"/>
    </location>
</feature>
<feature type="transmembrane region" description="Helical" evidence="1">
    <location>
        <begin position="87"/>
        <end position="107"/>
    </location>
</feature>
<feature type="transmembrane region" description="Helical" evidence="1">
    <location>
        <begin position="118"/>
        <end position="138"/>
    </location>
</feature>
<feature type="transmembrane region" description="Helical" evidence="1">
    <location>
        <begin position="144"/>
        <end position="164"/>
    </location>
</feature>
<feature type="transmembrane region" description="Helical" evidence="1">
    <location>
        <begin position="167"/>
        <end position="187"/>
    </location>
</feature>
<evidence type="ECO:0000255" key="1">
    <source>
        <dbReference type="HAMAP-Rule" id="MF_01043"/>
    </source>
</evidence>
<comment type="function">
    <text evidence="1">Catalyzes the transfer of an acyl group from acyl-phosphate (acyl-PO(4)) to glycerol-3-phosphate (G3P) to form lysophosphatidic acid (LPA). This enzyme utilizes acyl-phosphate as fatty acyl donor, but not acyl-CoA or acyl-ACP.</text>
</comment>
<comment type="catalytic activity">
    <reaction evidence="1">
        <text>an acyl phosphate + sn-glycerol 3-phosphate = a 1-acyl-sn-glycero-3-phosphate + phosphate</text>
        <dbReference type="Rhea" id="RHEA:34075"/>
        <dbReference type="ChEBI" id="CHEBI:43474"/>
        <dbReference type="ChEBI" id="CHEBI:57597"/>
        <dbReference type="ChEBI" id="CHEBI:57970"/>
        <dbReference type="ChEBI" id="CHEBI:59918"/>
        <dbReference type="EC" id="2.3.1.275"/>
    </reaction>
</comment>
<comment type="pathway">
    <text evidence="1">Lipid metabolism; phospholipid metabolism.</text>
</comment>
<comment type="subunit">
    <text evidence="1">Probably interacts with PlsX.</text>
</comment>
<comment type="subcellular location">
    <subcellularLocation>
        <location evidence="1">Cell inner membrane</location>
        <topology evidence="1">Multi-pass membrane protein</topology>
    </subcellularLocation>
</comment>
<comment type="similarity">
    <text evidence="1">Belongs to the PlsY family.</text>
</comment>
<name>PLSY_CAMJR</name>
<proteinExistence type="inferred from homology"/>
<gene>
    <name evidence="1" type="primary">plsY</name>
    <name type="ordered locus">CJE0406</name>
</gene>